<name>FABG_PERAE</name>
<keyword id="KW-0150">Chloroplast</keyword>
<keyword id="KW-0903">Direct protein sequencing</keyword>
<keyword id="KW-0275">Fatty acid biosynthesis</keyword>
<keyword id="KW-0276">Fatty acid metabolism</keyword>
<keyword id="KW-0444">Lipid biosynthesis</keyword>
<keyword id="KW-0443">Lipid metabolism</keyword>
<keyword id="KW-0521">NADP</keyword>
<keyword id="KW-0560">Oxidoreductase</keyword>
<keyword id="KW-0934">Plastid</keyword>
<organism>
    <name type="scientific">Persea americana</name>
    <name type="common">Avocado</name>
    <dbReference type="NCBI Taxonomy" id="3435"/>
    <lineage>
        <taxon>Eukaryota</taxon>
        <taxon>Viridiplantae</taxon>
        <taxon>Streptophyta</taxon>
        <taxon>Embryophyta</taxon>
        <taxon>Tracheophyta</taxon>
        <taxon>Spermatophyta</taxon>
        <taxon>Magnoliopsida</taxon>
        <taxon>Magnoliidae</taxon>
        <taxon>Laurales</taxon>
        <taxon>Lauraceae</taxon>
        <taxon>Persea</taxon>
    </lineage>
</organism>
<protein>
    <recommendedName>
        <fullName>3-oxoacyl-[acyl-carrier-protein] reductase</fullName>
        <ecNumber>1.1.1.100</ecNumber>
    </recommendedName>
    <alternativeName>
        <fullName>3-ketoacyl-acyl carrier protein reductase</fullName>
    </alternativeName>
</protein>
<proteinExistence type="evidence at protein level"/>
<dbReference type="EC" id="1.1.1.100"/>
<dbReference type="PIR" id="S13055">
    <property type="entry name" value="S13055"/>
</dbReference>
<dbReference type="UniPathway" id="UPA00094"/>
<dbReference type="GO" id="GO:0009507">
    <property type="term" value="C:chloroplast"/>
    <property type="evidence" value="ECO:0007669"/>
    <property type="project" value="UniProtKB-SubCell"/>
</dbReference>
<dbReference type="GO" id="GO:0004316">
    <property type="term" value="F:3-oxoacyl-[acyl-carrier-protein] reductase (NADPH) activity"/>
    <property type="evidence" value="ECO:0007669"/>
    <property type="project" value="UniProtKB-EC"/>
</dbReference>
<dbReference type="GO" id="GO:0006633">
    <property type="term" value="P:fatty acid biosynthetic process"/>
    <property type="evidence" value="ECO:0007669"/>
    <property type="project" value="UniProtKB-UniPathway"/>
</dbReference>
<dbReference type="Gene3D" id="3.40.50.720">
    <property type="entry name" value="NAD(P)-binding Rossmann-like Domain"/>
    <property type="match status" value="1"/>
</dbReference>
<dbReference type="InterPro" id="IPR036291">
    <property type="entry name" value="NAD(P)-bd_dom_sf"/>
</dbReference>
<dbReference type="InterPro" id="IPR050259">
    <property type="entry name" value="SDR"/>
</dbReference>
<dbReference type="InterPro" id="IPR002347">
    <property type="entry name" value="SDR_fam"/>
</dbReference>
<dbReference type="PANTHER" id="PTHR42879">
    <property type="entry name" value="3-OXOACYL-(ACYL-CARRIER-PROTEIN) REDUCTASE"/>
    <property type="match status" value="1"/>
</dbReference>
<dbReference type="PANTHER" id="PTHR42879:SF2">
    <property type="entry name" value="3-OXOACYL-[ACYL-CARRIER-PROTEIN] REDUCTASE FABG"/>
    <property type="match status" value="1"/>
</dbReference>
<dbReference type="Pfam" id="PF00106">
    <property type="entry name" value="adh_short"/>
    <property type="match status" value="1"/>
</dbReference>
<dbReference type="SUPFAM" id="SSF51735">
    <property type="entry name" value="NAD(P)-binding Rossmann-fold domains"/>
    <property type="match status" value="1"/>
</dbReference>
<evidence type="ECO:0000305" key="1"/>
<comment type="catalytic activity">
    <reaction>
        <text>a (3R)-hydroxyacyl-[ACP] + NADP(+) = a 3-oxoacyl-[ACP] + NADPH + H(+)</text>
        <dbReference type="Rhea" id="RHEA:17397"/>
        <dbReference type="Rhea" id="RHEA-COMP:9916"/>
        <dbReference type="Rhea" id="RHEA-COMP:9945"/>
        <dbReference type="ChEBI" id="CHEBI:15378"/>
        <dbReference type="ChEBI" id="CHEBI:57783"/>
        <dbReference type="ChEBI" id="CHEBI:58349"/>
        <dbReference type="ChEBI" id="CHEBI:78776"/>
        <dbReference type="ChEBI" id="CHEBI:78827"/>
        <dbReference type="EC" id="1.1.1.100"/>
    </reaction>
</comment>
<comment type="pathway">
    <text>Lipid metabolism; fatty acid biosynthesis.</text>
</comment>
<comment type="subunit">
    <text evidence="1">Homotetramer.</text>
</comment>
<comment type="subcellular location">
    <subcellularLocation>
        <location>Plastid</location>
        <location>Chloroplast</location>
    </subcellularLocation>
    <subcellularLocation>
        <location>Plastid</location>
    </subcellularLocation>
    <text>And non-photosynthetic plastids.</text>
</comment>
<comment type="tissue specificity">
    <text>Mesocarp.</text>
</comment>
<comment type="miscellaneous">
    <text>Exhibits a marked preference for acyl-carrier protein derivatives over CoA derivatives as substrates.</text>
</comment>
<comment type="similarity">
    <text evidence="1">Belongs to the short-chain dehydrogenases/reductases (SDR) family.</text>
</comment>
<feature type="chain" id="PRO_0000054662" description="3-oxoacyl-[acyl-carrier-protein] reductase">
    <location>
        <begin position="1"/>
        <end position="106" status="greater than"/>
    </location>
</feature>
<feature type="non-consecutive residues" evidence="1">
    <location>
        <begin position="24"/>
        <end position="25"/>
    </location>
</feature>
<feature type="non-consecutive residues" evidence="1">
    <location>
        <begin position="42"/>
        <end position="43"/>
    </location>
</feature>
<feature type="non-consecutive residues" evidence="1">
    <location>
        <begin position="51"/>
        <end position="52"/>
    </location>
</feature>
<feature type="non-consecutive residues" evidence="1">
    <location>
        <begin position="70"/>
        <end position="71"/>
    </location>
</feature>
<feature type="non-consecutive residues" evidence="1">
    <location>
        <begin position="78"/>
        <end position="79"/>
    </location>
</feature>
<feature type="non-consecutive residues" evidence="1">
    <location>
        <begin position="97"/>
        <end position="98"/>
    </location>
</feature>
<feature type="non-terminal residue">
    <location>
        <position position="106"/>
    </location>
</feature>
<reference key="1">
    <citation type="journal article" date="1990" name="Biochem. J.">
        <title>3-oxoacyl-(acyl-carrier protein) reductase from avocado (Persea americana) fruit mesocarp.</title>
        <authorList>
            <person name="Sheldon P.S."/>
            <person name="Kekwick R.G.O."/>
            <person name="Sidebottom C.M."/>
            <person name="Smith C.G."/>
            <person name="Slabas A.R."/>
        </authorList>
    </citation>
    <scope>PROTEIN SEQUENCE</scope>
    <source>
        <strain>cv. Fuerte</strain>
        <tissue>Mesocarp</tissue>
    </source>
</reference>
<sequence>VYEQVSIEVPQSVEAPVVIITGASEIEASTIQALSFGPDVXKEADVEAMIKAVDAWGQVDVLINNAGITRAGVIGLQKNINVNAIAPGFIASDMTAKILETIPLGR</sequence>
<accession>P27583</accession>